<name>MLN_HUMAN</name>
<gene>
    <name evidence="6" type="primary">MRLN</name>
    <name evidence="4" type="synonym">MLN</name>
</gene>
<evidence type="ECO:0000250" key="1">
    <source>
        <dbReference type="UniProtKB" id="Q9CV60"/>
    </source>
</evidence>
<evidence type="ECO:0000255" key="2"/>
<evidence type="ECO:0000269" key="3">
    <source>
    </source>
</evidence>
<evidence type="ECO:0000303" key="4">
    <source>
    </source>
</evidence>
<evidence type="ECO:0000305" key="5"/>
<evidence type="ECO:0000312" key="6">
    <source>
        <dbReference type="HGNC" id="HGNC:48649"/>
    </source>
</evidence>
<keyword id="KW-0472">Membrane</keyword>
<keyword id="KW-1185">Reference proteome</keyword>
<keyword id="KW-0703">Sarcoplasmic reticulum</keyword>
<keyword id="KW-0812">Transmembrane</keyword>
<keyword id="KW-1133">Transmembrane helix</keyword>
<dbReference type="EMBL" id="AF086308">
    <property type="status" value="NOT_ANNOTATED_CDS"/>
    <property type="molecule type" value="mRNA"/>
</dbReference>
<dbReference type="EMBL" id="AC022027">
    <property type="status" value="NOT_ANNOTATED_CDS"/>
    <property type="molecule type" value="Genomic_DNA"/>
</dbReference>
<dbReference type="CCDS" id="CCDS81467.1"/>
<dbReference type="RefSeq" id="NP_001291660.1">
    <property type="nucleotide sequence ID" value="NM_001304731.2"/>
</dbReference>
<dbReference type="RefSeq" id="NP_001291661.1">
    <property type="nucleotide sequence ID" value="NM_001304732.2"/>
</dbReference>
<dbReference type="FunCoup" id="P0DMT0">
    <property type="interactions" value="3"/>
</dbReference>
<dbReference type="STRING" id="9606.ENSP00000488748"/>
<dbReference type="TCDB" id="1.A.50.3.1">
    <property type="family name" value="the phospholamban (ca(2+)-channel and ca(2+)-atpase regulator) (plb) family"/>
</dbReference>
<dbReference type="BioMuta" id="MRLN"/>
<dbReference type="PeptideAtlas" id="P0DMT0"/>
<dbReference type="Antibodypedia" id="82464">
    <property type="antibodies" value="8 antibodies from 2 providers"/>
</dbReference>
<dbReference type="DNASU" id="100507027"/>
<dbReference type="Ensembl" id="ENST00000414264.6">
    <property type="protein sequence ID" value="ENSP00000488748.1"/>
    <property type="gene ID" value="ENSG00000227877.7"/>
</dbReference>
<dbReference type="Ensembl" id="ENST00000430431.5">
    <property type="protein sequence ID" value="ENSP00000488299.1"/>
    <property type="gene ID" value="ENSG00000227877.7"/>
</dbReference>
<dbReference type="Ensembl" id="ENST00000594536.5">
    <property type="protein sequence ID" value="ENSP00000488584.1"/>
    <property type="gene ID" value="ENSG00000227877.7"/>
</dbReference>
<dbReference type="Ensembl" id="ENST00000628562.1">
    <property type="protein sequence ID" value="ENSP00000488429.1"/>
    <property type="gene ID" value="ENSG00000227877.7"/>
</dbReference>
<dbReference type="GeneID" id="100507027"/>
<dbReference type="KEGG" id="hsa:100507027"/>
<dbReference type="MANE-Select" id="ENST00000414264.6">
    <property type="protein sequence ID" value="ENSP00000488748.1"/>
    <property type="RefSeq nucleotide sequence ID" value="NM_001304731.2"/>
    <property type="RefSeq protein sequence ID" value="NP_001291660.1"/>
</dbReference>
<dbReference type="AGR" id="HGNC:48649"/>
<dbReference type="CTD" id="100507027"/>
<dbReference type="DisGeNET" id="100507027"/>
<dbReference type="GeneCards" id="MRLN"/>
<dbReference type="HGNC" id="HGNC:48649">
    <property type="gene designation" value="MRLN"/>
</dbReference>
<dbReference type="HPA" id="ENSG00000227877">
    <property type="expression patterns" value="Tissue enhanced (skeletal muscle, tongue)"/>
</dbReference>
<dbReference type="MIM" id="616246">
    <property type="type" value="gene"/>
</dbReference>
<dbReference type="neXtProt" id="NX_P0DMT0"/>
<dbReference type="OpenTargets" id="ENSG00000227877"/>
<dbReference type="VEuPathDB" id="HostDB:ENSG00000227877"/>
<dbReference type="GeneTree" id="ENSGT01120000273085"/>
<dbReference type="HOGENOM" id="CLU_3191042_0_0_1"/>
<dbReference type="InParanoid" id="P0DMT0"/>
<dbReference type="OrthoDB" id="9589532at2759"/>
<dbReference type="PAN-GO" id="P0DMT0">
    <property type="GO annotations" value="0 GO annotations based on evolutionary models"/>
</dbReference>
<dbReference type="PathwayCommons" id="P0DMT0"/>
<dbReference type="BioGRID-ORCS" id="100507027">
    <property type="hits" value="1 hit in 104 CRISPR screens"/>
</dbReference>
<dbReference type="Pharos" id="P0DMT0">
    <property type="development level" value="Tdark"/>
</dbReference>
<dbReference type="PRO" id="PR:P0DMT0"/>
<dbReference type="Proteomes" id="UP000005640">
    <property type="component" value="Chromosome 10"/>
</dbReference>
<dbReference type="Bgee" id="ENSG00000227877">
    <property type="expression patterns" value="Expressed in biceps brachii and 121 other cell types or tissues"/>
</dbReference>
<dbReference type="GO" id="GO:0033017">
    <property type="term" value="C:sarcoplasmic reticulum membrane"/>
    <property type="evidence" value="ECO:0000250"/>
    <property type="project" value="UniProtKB"/>
</dbReference>
<dbReference type="GO" id="GO:0004857">
    <property type="term" value="F:enzyme inhibitor activity"/>
    <property type="evidence" value="ECO:0000250"/>
    <property type="project" value="UniProtKB"/>
</dbReference>
<dbReference type="GO" id="GO:1902081">
    <property type="term" value="P:negative regulation of calcium ion import into sarcoplasmic reticulum"/>
    <property type="evidence" value="ECO:0000250"/>
    <property type="project" value="UniProtKB"/>
</dbReference>
<dbReference type="CDD" id="cd20260">
    <property type="entry name" value="Myoregulin"/>
    <property type="match status" value="1"/>
</dbReference>
<dbReference type="InterPro" id="IPR049526">
    <property type="entry name" value="Myoregulin"/>
</dbReference>
<feature type="chain" id="PRO_0000432708" description="Myoregulin">
    <location>
        <begin position="1"/>
        <end position="46"/>
    </location>
</feature>
<feature type="topological domain" description="Cytoplasmic" evidence="5">
    <location>
        <begin position="1"/>
        <end position="21"/>
    </location>
</feature>
<feature type="transmembrane region" description="Helical" evidence="2">
    <location>
        <begin position="22"/>
        <end position="42"/>
    </location>
</feature>
<feature type="topological domain" description="Lumenal" evidence="5">
    <location>
        <begin position="43"/>
        <end position="46"/>
    </location>
</feature>
<accession>P0DMT0</accession>
<reference key="1">
    <citation type="submission" date="1998-08" db="EMBL/GenBank/DDBJ databases">
        <title>Full clone sequencing of the longest available member from each UniGene cluster.</title>
        <authorList>
            <person name="Woessner J."/>
            <person name="Tan F."/>
            <person name="Marra M."/>
            <person name="Kucaba T."/>
            <person name="Yandell M."/>
            <person name="Martin J."/>
            <person name="Marth G."/>
            <person name="Bowles L."/>
            <person name="Wylie T."/>
            <person name="Bowers Y."/>
            <person name="Steptoe M."/>
            <person name="Theising B."/>
            <person name="Geisel S."/>
            <person name="Allen M."/>
            <person name="Underwood K."/>
            <person name="Chappell J."/>
            <person name="Person B."/>
            <person name="Gibbons M."/>
            <person name="Harvey N."/>
            <person name="Pape D."/>
            <person name="Chamberlain A."/>
            <person name="Morales R."/>
            <person name="Schurk R."/>
            <person name="Ritter E."/>
            <person name="Kohn S."/>
            <person name="Swaller T."/>
            <person name="Behymer K."/>
            <person name="Hillier L."/>
            <person name="Wilson R."/>
            <person name="Waterston R."/>
        </authorList>
    </citation>
    <scope>NUCLEOTIDE SEQUENCE [LARGE SCALE MRNA]</scope>
</reference>
<reference key="2">
    <citation type="journal article" date="2004" name="Nature">
        <title>The DNA sequence and comparative analysis of human chromosome 10.</title>
        <authorList>
            <person name="Deloukas P."/>
            <person name="Earthrowl M.E."/>
            <person name="Grafham D.V."/>
            <person name="Rubenfield M."/>
            <person name="French L."/>
            <person name="Steward C.A."/>
            <person name="Sims S.K."/>
            <person name="Jones M.C."/>
            <person name="Searle S."/>
            <person name="Scott C."/>
            <person name="Howe K."/>
            <person name="Hunt S.E."/>
            <person name="Andrews T.D."/>
            <person name="Gilbert J.G.R."/>
            <person name="Swarbreck D."/>
            <person name="Ashurst J.L."/>
            <person name="Taylor A."/>
            <person name="Battles J."/>
            <person name="Bird C.P."/>
            <person name="Ainscough R."/>
            <person name="Almeida J.P."/>
            <person name="Ashwell R.I.S."/>
            <person name="Ambrose K.D."/>
            <person name="Babbage A.K."/>
            <person name="Bagguley C.L."/>
            <person name="Bailey J."/>
            <person name="Banerjee R."/>
            <person name="Bates K."/>
            <person name="Beasley H."/>
            <person name="Bray-Allen S."/>
            <person name="Brown A.J."/>
            <person name="Brown J.Y."/>
            <person name="Burford D.C."/>
            <person name="Burrill W."/>
            <person name="Burton J."/>
            <person name="Cahill P."/>
            <person name="Camire D."/>
            <person name="Carter N.P."/>
            <person name="Chapman J.C."/>
            <person name="Clark S.Y."/>
            <person name="Clarke G."/>
            <person name="Clee C.M."/>
            <person name="Clegg S."/>
            <person name="Corby N."/>
            <person name="Coulson A."/>
            <person name="Dhami P."/>
            <person name="Dutta I."/>
            <person name="Dunn M."/>
            <person name="Faulkner L."/>
            <person name="Frankish A."/>
            <person name="Frankland J.A."/>
            <person name="Garner P."/>
            <person name="Garnett J."/>
            <person name="Gribble S."/>
            <person name="Griffiths C."/>
            <person name="Grocock R."/>
            <person name="Gustafson E."/>
            <person name="Hammond S."/>
            <person name="Harley J.L."/>
            <person name="Hart E."/>
            <person name="Heath P.D."/>
            <person name="Ho T.P."/>
            <person name="Hopkins B."/>
            <person name="Horne J."/>
            <person name="Howden P.J."/>
            <person name="Huckle E."/>
            <person name="Hynds C."/>
            <person name="Johnson C."/>
            <person name="Johnson D."/>
            <person name="Kana A."/>
            <person name="Kay M."/>
            <person name="Kimberley A.M."/>
            <person name="Kershaw J.K."/>
            <person name="Kokkinaki M."/>
            <person name="Laird G.K."/>
            <person name="Lawlor S."/>
            <person name="Lee H.M."/>
            <person name="Leongamornlert D.A."/>
            <person name="Laird G."/>
            <person name="Lloyd C."/>
            <person name="Lloyd D.M."/>
            <person name="Loveland J."/>
            <person name="Lovell J."/>
            <person name="McLaren S."/>
            <person name="McLay K.E."/>
            <person name="McMurray A."/>
            <person name="Mashreghi-Mohammadi M."/>
            <person name="Matthews L."/>
            <person name="Milne S."/>
            <person name="Nickerson T."/>
            <person name="Nguyen M."/>
            <person name="Overton-Larty E."/>
            <person name="Palmer S.A."/>
            <person name="Pearce A.V."/>
            <person name="Peck A.I."/>
            <person name="Pelan S."/>
            <person name="Phillimore B."/>
            <person name="Porter K."/>
            <person name="Rice C.M."/>
            <person name="Rogosin A."/>
            <person name="Ross M.T."/>
            <person name="Sarafidou T."/>
            <person name="Sehra H.K."/>
            <person name="Shownkeen R."/>
            <person name="Skuce C.D."/>
            <person name="Smith M."/>
            <person name="Standring L."/>
            <person name="Sycamore N."/>
            <person name="Tester J."/>
            <person name="Thorpe A."/>
            <person name="Torcasso W."/>
            <person name="Tracey A."/>
            <person name="Tromans A."/>
            <person name="Tsolas J."/>
            <person name="Wall M."/>
            <person name="Walsh J."/>
            <person name="Wang H."/>
            <person name="Weinstock K."/>
            <person name="West A.P."/>
            <person name="Willey D.L."/>
            <person name="Whitehead S.L."/>
            <person name="Wilming L."/>
            <person name="Wray P.W."/>
            <person name="Young L."/>
            <person name="Chen Y."/>
            <person name="Lovering R.C."/>
            <person name="Moschonas N.K."/>
            <person name="Siebert R."/>
            <person name="Fechtel K."/>
            <person name="Bentley D."/>
            <person name="Durbin R.M."/>
            <person name="Hubbard T."/>
            <person name="Doucette-Stamm L."/>
            <person name="Beck S."/>
            <person name="Smith D.R."/>
            <person name="Rogers J."/>
        </authorList>
    </citation>
    <scope>NUCLEOTIDE SEQUENCE [LARGE SCALE GENOMIC DNA]</scope>
</reference>
<reference key="3">
    <citation type="journal article" date="2015" name="Cell">
        <title>A micropeptide encoded by a putative long noncoding RNA regulates muscle performance.</title>
        <authorList>
            <person name="Anderson D.M."/>
            <person name="Anderson K.M."/>
            <person name="Chang C.L."/>
            <person name="Makarewich C.A."/>
            <person name="Nelson B.R."/>
            <person name="McAnally J.R."/>
            <person name="Kasaragod P."/>
            <person name="Shelton J.M."/>
            <person name="Liou J."/>
            <person name="Bassel-Duby R."/>
            <person name="Olson E.N."/>
        </authorList>
    </citation>
    <scope>FUNCTION</scope>
</reference>
<organism>
    <name type="scientific">Homo sapiens</name>
    <name type="common">Human</name>
    <dbReference type="NCBI Taxonomy" id="9606"/>
    <lineage>
        <taxon>Eukaryota</taxon>
        <taxon>Metazoa</taxon>
        <taxon>Chordata</taxon>
        <taxon>Craniata</taxon>
        <taxon>Vertebrata</taxon>
        <taxon>Euteleostomi</taxon>
        <taxon>Mammalia</taxon>
        <taxon>Eutheria</taxon>
        <taxon>Euarchontoglires</taxon>
        <taxon>Primates</taxon>
        <taxon>Haplorrhini</taxon>
        <taxon>Catarrhini</taxon>
        <taxon>Hominidae</taxon>
        <taxon>Homo</taxon>
    </lineage>
</organism>
<sequence length="46" mass="5194">MTGKNWILISTTTPKSLEDEIVGRLLKILFVIFVDLISIIYVVITS</sequence>
<protein>
    <recommendedName>
        <fullName evidence="4">Myoregulin</fullName>
    </recommendedName>
</protein>
<comment type="function">
    <text evidence="1 3">Inhibits the activity of ATP2A1/SERCA1 ATPase in sarcoplasmic reticulum by decreasing the apparent affinity of the ATPase for Ca(2+), thereby acting as a key regulator of skeletal muscle activity. Its high expression in adult skeletal muscle, suggests that it constitutes the predominant regulator of ATP2A1/SERCA1 in adult skeletal muscle. Also inhibits the activity of ATP2A2/SERCA2 and ATP2A3/SERCA3.</text>
</comment>
<comment type="subunit">
    <text evidence="1">Homooligomer. Monomer. Interacts with ATP2A1/SERCA1. Interacts as a monomer with ATP2A2/SERCA2; the interaction inhibits ATP2A2 activity.</text>
</comment>
<comment type="subcellular location">
    <subcellularLocation>
        <location evidence="1">Sarcoplasmic reticulum membrane</location>
        <topology evidence="1">Single-pass membrane protein</topology>
    </subcellularLocation>
</comment>
<proteinExistence type="inferred from homology"/>